<sequence length="261" mass="29691">MAHQAHAYHMVDPSPWPLTGAIAALLLTSGTAVWFHFHSLTLLTLGNVLLLLTMYQWWRDIIREGTFQGHHTPPVQKGLRYGMILFITSEVFFFLGFFWAFYHASLAPTPELGGCWPPTGITTLDPFEVPLLNTAVLLASGVTVTWAHHSIMEGERKQTIQALTLTILLGFYFTFLQGMEYYEAPFTIADGVYGSTFFVATGFHGLHVIIGSTFLAVCLLRQVQYHFTSEHHFGFEAAAWYWHFVDVVWLFLYVSIYWWGS</sequence>
<evidence type="ECO:0000250" key="1">
    <source>
        <dbReference type="UniProtKB" id="P00415"/>
    </source>
</evidence>
<evidence type="ECO:0000250" key="2">
    <source>
        <dbReference type="UniProtKB" id="P00420"/>
    </source>
</evidence>
<evidence type="ECO:0000305" key="3"/>
<feature type="chain" id="PRO_0000183817" description="Cytochrome c oxidase subunit 3">
    <location>
        <begin position="1"/>
        <end position="261"/>
    </location>
</feature>
<feature type="topological domain" description="Mitochondrial matrix" evidence="1">
    <location>
        <begin position="1"/>
        <end position="15"/>
    </location>
</feature>
<feature type="transmembrane region" description="Helical; Name=I" evidence="1">
    <location>
        <begin position="16"/>
        <end position="34"/>
    </location>
</feature>
<feature type="topological domain" description="Mitochondrial intermembrane" evidence="1">
    <location>
        <begin position="35"/>
        <end position="40"/>
    </location>
</feature>
<feature type="transmembrane region" description="Helical; Name=II" evidence="1">
    <location>
        <begin position="41"/>
        <end position="66"/>
    </location>
</feature>
<feature type="topological domain" description="Mitochondrial matrix" evidence="1">
    <location>
        <begin position="67"/>
        <end position="72"/>
    </location>
</feature>
<feature type="transmembrane region" description="Helical; Name=III" evidence="1">
    <location>
        <begin position="73"/>
        <end position="105"/>
    </location>
</feature>
<feature type="topological domain" description="Mitochondrial intermembrane" evidence="1">
    <location>
        <begin position="106"/>
        <end position="128"/>
    </location>
</feature>
<feature type="transmembrane region" description="Helical; Name=IV" evidence="1">
    <location>
        <begin position="129"/>
        <end position="152"/>
    </location>
</feature>
<feature type="topological domain" description="Mitochondrial matrix" evidence="1">
    <location>
        <begin position="153"/>
        <end position="155"/>
    </location>
</feature>
<feature type="transmembrane region" description="Helical; Name=V" evidence="1">
    <location>
        <begin position="156"/>
        <end position="183"/>
    </location>
</feature>
<feature type="topological domain" description="Mitochondrial intermembrane" evidence="1">
    <location>
        <begin position="184"/>
        <end position="190"/>
    </location>
</feature>
<feature type="transmembrane region" description="Helical; Name=VI" evidence="1">
    <location>
        <begin position="191"/>
        <end position="223"/>
    </location>
</feature>
<feature type="topological domain" description="Mitochondrial matrix" evidence="1">
    <location>
        <begin position="224"/>
        <end position="232"/>
    </location>
</feature>
<feature type="transmembrane region" description="Helical; Name=VII" evidence="1">
    <location>
        <begin position="233"/>
        <end position="256"/>
    </location>
</feature>
<feature type="topological domain" description="Mitochondrial intermembrane" evidence="1">
    <location>
        <begin position="257"/>
        <end position="261"/>
    </location>
</feature>
<proteinExistence type="inferred from homology"/>
<keyword id="KW-0472">Membrane</keyword>
<keyword id="KW-0496">Mitochondrion</keyword>
<keyword id="KW-0999">Mitochondrion inner membrane</keyword>
<keyword id="KW-1278">Translocase</keyword>
<keyword id="KW-0812">Transmembrane</keyword>
<keyword id="KW-1133">Transmembrane helix</keyword>
<gene>
    <name type="primary">mt-co3</name>
    <name type="synonym">coiii</name>
    <name type="synonym">coxiii</name>
    <name type="synonym">mtco3</name>
</gene>
<name>COX3_ONCMA</name>
<accession>P69217</accession>
<accession>P20683</accession>
<dbReference type="EC" id="7.1.1.9"/>
<dbReference type="EMBL" id="D63410">
    <property type="protein sequence ID" value="BAA09711.1"/>
    <property type="molecule type" value="Genomic_DNA"/>
</dbReference>
<dbReference type="EMBL" id="D63336">
    <property type="protein sequence ID" value="BAA09653.1"/>
    <property type="molecule type" value="Genomic_DNA"/>
</dbReference>
<dbReference type="SMR" id="P69217"/>
<dbReference type="GO" id="GO:0005743">
    <property type="term" value="C:mitochondrial inner membrane"/>
    <property type="evidence" value="ECO:0007669"/>
    <property type="project" value="UniProtKB-SubCell"/>
</dbReference>
<dbReference type="GO" id="GO:0045277">
    <property type="term" value="C:respiratory chain complex IV"/>
    <property type="evidence" value="ECO:0000250"/>
    <property type="project" value="UniProtKB"/>
</dbReference>
<dbReference type="GO" id="GO:0004129">
    <property type="term" value="F:cytochrome-c oxidase activity"/>
    <property type="evidence" value="ECO:0007669"/>
    <property type="project" value="UniProtKB-EC"/>
</dbReference>
<dbReference type="GO" id="GO:0006123">
    <property type="term" value="P:mitochondrial electron transport, cytochrome c to oxygen"/>
    <property type="evidence" value="ECO:0007669"/>
    <property type="project" value="TreeGrafter"/>
</dbReference>
<dbReference type="CDD" id="cd01665">
    <property type="entry name" value="Cyt_c_Oxidase_III"/>
    <property type="match status" value="1"/>
</dbReference>
<dbReference type="FunFam" id="1.10.287.70:FF:000048">
    <property type="entry name" value="Cytochrome c oxidase subunit 3"/>
    <property type="match status" value="1"/>
</dbReference>
<dbReference type="FunFam" id="1.20.120.80:FF:000002">
    <property type="entry name" value="Cytochrome c oxidase subunit 3"/>
    <property type="match status" value="1"/>
</dbReference>
<dbReference type="Gene3D" id="1.10.287.70">
    <property type="match status" value="1"/>
</dbReference>
<dbReference type="Gene3D" id="1.20.120.80">
    <property type="entry name" value="Cytochrome c oxidase, subunit III, four-helix bundle"/>
    <property type="match status" value="1"/>
</dbReference>
<dbReference type="InterPro" id="IPR024791">
    <property type="entry name" value="Cyt_c/ubiquinol_Oxase_su3"/>
</dbReference>
<dbReference type="InterPro" id="IPR033945">
    <property type="entry name" value="Cyt_c_oxase_su3_dom"/>
</dbReference>
<dbReference type="InterPro" id="IPR000298">
    <property type="entry name" value="Cyt_c_oxidase-like_su3"/>
</dbReference>
<dbReference type="InterPro" id="IPR035973">
    <property type="entry name" value="Cyt_c_oxidase_su3-like_sf"/>
</dbReference>
<dbReference type="InterPro" id="IPR013833">
    <property type="entry name" value="Cyt_c_oxidase_su3_a-hlx"/>
</dbReference>
<dbReference type="PANTHER" id="PTHR11403:SF7">
    <property type="entry name" value="CYTOCHROME C OXIDASE SUBUNIT 3"/>
    <property type="match status" value="1"/>
</dbReference>
<dbReference type="PANTHER" id="PTHR11403">
    <property type="entry name" value="CYTOCHROME C OXIDASE SUBUNIT III"/>
    <property type="match status" value="1"/>
</dbReference>
<dbReference type="Pfam" id="PF00510">
    <property type="entry name" value="COX3"/>
    <property type="match status" value="1"/>
</dbReference>
<dbReference type="SUPFAM" id="SSF81452">
    <property type="entry name" value="Cytochrome c oxidase subunit III-like"/>
    <property type="match status" value="1"/>
</dbReference>
<dbReference type="PROSITE" id="PS50253">
    <property type="entry name" value="COX3"/>
    <property type="match status" value="1"/>
</dbReference>
<comment type="function">
    <text evidence="2">Component of the cytochrome c oxidase, the last enzyme in the mitochondrial electron transport chain which drives oxidative phosphorylation. The respiratory chain contains 3 multisubunit complexes succinate dehydrogenase (complex II, CII), ubiquinol-cytochrome c oxidoreductase (cytochrome b-c1 complex, complex III, CIII) and cytochrome c oxidase (complex IV, CIV), that cooperate to transfer electrons derived from NADH and succinate to molecular oxygen, creating an electrochemical gradient over the inner membrane that drives transmembrane transport and the ATP synthase. Cytochrome c oxidase is the component of the respiratory chain that catalyzes the reduction of oxygen to water. Electrons originating from reduced cytochrome c in the intermembrane space (IMS) are transferred via the dinuclear copper A center (CU(A)) of subunit 2 and heme A of subunit 1 to the active site in subunit 1, a binuclear center (BNC) formed by heme A3 and copper B (CU(B)). The BNC reduces molecular oxygen to 2 water molecules using 4 electrons from cytochrome c in the IMS and 4 protons from the mitochondrial matrix.</text>
</comment>
<comment type="catalytic activity">
    <reaction evidence="2">
        <text>4 Fe(II)-[cytochrome c] + O2 + 8 H(+)(in) = 4 Fe(III)-[cytochrome c] + 2 H2O + 4 H(+)(out)</text>
        <dbReference type="Rhea" id="RHEA:11436"/>
        <dbReference type="Rhea" id="RHEA-COMP:10350"/>
        <dbReference type="Rhea" id="RHEA-COMP:14399"/>
        <dbReference type="ChEBI" id="CHEBI:15377"/>
        <dbReference type="ChEBI" id="CHEBI:15378"/>
        <dbReference type="ChEBI" id="CHEBI:15379"/>
        <dbReference type="ChEBI" id="CHEBI:29033"/>
        <dbReference type="ChEBI" id="CHEBI:29034"/>
        <dbReference type="EC" id="7.1.1.9"/>
    </reaction>
    <physiologicalReaction direction="left-to-right" evidence="2">
        <dbReference type="Rhea" id="RHEA:11437"/>
    </physiologicalReaction>
</comment>
<comment type="subunit">
    <text evidence="1">Component of the cytochrome c oxidase (complex IV, CIV), a multisubunit enzyme composed of 14 subunits. The complex is composed of a catalytic core of 3 subunits MT-CO1, MT-CO2 and MT-CO3, encoded in the mitochondrial DNA, and 11 supernumerary subunits COX4I, COX5A, COX5B, COX6A, COX6B, COX6C, COX7A, COX7B, COX7C, COX8 and NDUFA4, which are encoded in the nuclear genome. The complex exists as a monomer or a dimer and forms supercomplexes (SCs) in the inner mitochondrial membrane with NADH-ubiquinone oxidoreductase (complex I, CI) and ubiquinol-cytochrome c oxidoreductase (cytochrome b-c1 complex, complex III, CIII), resulting in different assemblies (supercomplex SCI(1)III(2)IV(1) and megacomplex MCI(2)III(2)IV(2)).</text>
</comment>
<comment type="subcellular location">
    <subcellularLocation>
        <location evidence="1">Mitochondrion inner membrane</location>
        <topology evidence="1">Multi-pass membrane protein</topology>
    </subcellularLocation>
</comment>
<comment type="similarity">
    <text evidence="3">Belongs to the cytochrome c oxidase subunit 3 family.</text>
</comment>
<organism>
    <name type="scientific">Oncorhynchus masou</name>
    <name type="common">Cherry salmon</name>
    <name type="synonym">Masu salmon</name>
    <dbReference type="NCBI Taxonomy" id="8020"/>
    <lineage>
        <taxon>Eukaryota</taxon>
        <taxon>Metazoa</taxon>
        <taxon>Chordata</taxon>
        <taxon>Craniata</taxon>
        <taxon>Vertebrata</taxon>
        <taxon>Euteleostomi</taxon>
        <taxon>Actinopterygii</taxon>
        <taxon>Neopterygii</taxon>
        <taxon>Teleostei</taxon>
        <taxon>Protacanthopterygii</taxon>
        <taxon>Salmoniformes</taxon>
        <taxon>Salmonidae</taxon>
        <taxon>Salmoninae</taxon>
        <taxon>Oncorhynchus</taxon>
    </lineage>
</organism>
<protein>
    <recommendedName>
        <fullName>Cytochrome c oxidase subunit 3</fullName>
        <ecNumber>7.1.1.9</ecNumber>
    </recommendedName>
    <alternativeName>
        <fullName>Cytochrome c oxidase polypeptide III</fullName>
    </alternativeName>
</protein>
<geneLocation type="mitochondrion"/>
<reference key="1">
    <citation type="journal article" date="1996" name="Zool. Sci.">
        <title>Genetic relationship among three subspecies of Oncorhynchus masou determined by mitochondrial DNA sequence analysis.</title>
        <authorList>
            <person name="Oohara I."/>
            <person name="Okazaki T."/>
        </authorList>
    </citation>
    <scope>NUCLEOTIDE SEQUENCE [GENOMIC DNA]</scope>
</reference>